<proteinExistence type="inferred from homology"/>
<reference key="1">
    <citation type="journal article" date="2007" name="PLoS ONE">
        <title>Molecular correlates of host specialization in Staphylococcus aureus.</title>
        <authorList>
            <person name="Herron-Olson L."/>
            <person name="Fitzgerald J.R."/>
            <person name="Musser J.M."/>
            <person name="Kapur V."/>
        </authorList>
    </citation>
    <scope>NUCLEOTIDE SEQUENCE [LARGE SCALE GENOMIC DNA]</scope>
    <source>
        <strain>bovine RF122 / ET3-1</strain>
    </source>
</reference>
<comment type="similarity">
    <text evidence="1">Belongs to the UPF0637 family.</text>
</comment>
<sequence>MTKYTFKPKDFKAFNVEGLDARMEALNEYIRPQLHELGEYFSDFFTSQTGETFYPHVAKHARRSVNPPKDTWVAFATNKRGYKMLPHFQIGMFEDQLFVMFGIMHEAKDKATRAKVFERKFKAIQQLPDDYRVCLDHMKPDKPFIKDLTDDDLKEAIQRAINVKKGEFFIARAITPQDKRLKSDKAFIAFLEETFDQFLPFYSA</sequence>
<dbReference type="EMBL" id="AJ938182">
    <property type="protein sequence ID" value="CAI80660.1"/>
    <property type="molecule type" value="Genomic_DNA"/>
</dbReference>
<dbReference type="RefSeq" id="WP_000170598.1">
    <property type="nucleotide sequence ID" value="NC_007622.1"/>
</dbReference>
<dbReference type="SMR" id="Q2YX68"/>
<dbReference type="KEGG" id="sab:SAB0972c"/>
<dbReference type="HOGENOM" id="CLU_096059_0_0_9"/>
<dbReference type="Gene3D" id="3.30.930.20">
    <property type="entry name" value="Protein of unknown function DUF1054"/>
    <property type="match status" value="1"/>
</dbReference>
<dbReference type="HAMAP" id="MF_01851">
    <property type="entry name" value="UPF0637"/>
    <property type="match status" value="1"/>
</dbReference>
<dbReference type="InterPro" id="IPR009403">
    <property type="entry name" value="UPF0637"/>
</dbReference>
<dbReference type="InterPro" id="IPR053707">
    <property type="entry name" value="UPF0637_domain_sf"/>
</dbReference>
<dbReference type="Pfam" id="PF06335">
    <property type="entry name" value="DUF1054"/>
    <property type="match status" value="1"/>
</dbReference>
<dbReference type="PIRSF" id="PIRSF021332">
    <property type="entry name" value="DUF1054"/>
    <property type="match status" value="1"/>
</dbReference>
<dbReference type="SUPFAM" id="SSF142913">
    <property type="entry name" value="YktB/PF0168-like"/>
    <property type="match status" value="1"/>
</dbReference>
<evidence type="ECO:0000255" key="1">
    <source>
        <dbReference type="HAMAP-Rule" id="MF_01851"/>
    </source>
</evidence>
<organism>
    <name type="scientific">Staphylococcus aureus (strain bovine RF122 / ET3-1)</name>
    <dbReference type="NCBI Taxonomy" id="273036"/>
    <lineage>
        <taxon>Bacteria</taxon>
        <taxon>Bacillati</taxon>
        <taxon>Bacillota</taxon>
        <taxon>Bacilli</taxon>
        <taxon>Bacillales</taxon>
        <taxon>Staphylococcaceae</taxon>
        <taxon>Staphylococcus</taxon>
    </lineage>
</organism>
<name>Y972_STAAB</name>
<protein>
    <recommendedName>
        <fullName evidence="1">UPF0637 protein SAB0972c</fullName>
    </recommendedName>
</protein>
<feature type="chain" id="PRO_0000348319" description="UPF0637 protein SAB0972c">
    <location>
        <begin position="1"/>
        <end position="204"/>
    </location>
</feature>
<accession>Q2YX68</accession>
<gene>
    <name type="ordered locus">SAB0972c</name>
</gene>